<accession>E1BAR0</accession>
<name>SMIM5_BOVIN</name>
<gene>
    <name type="primary">SMIM5</name>
</gene>
<comment type="subcellular location">
    <subcellularLocation>
        <location evidence="2">Membrane</location>
        <topology evidence="2">Single-pass membrane protein</topology>
    </subcellularLocation>
</comment>
<organism>
    <name type="scientific">Bos taurus</name>
    <name type="common">Bovine</name>
    <dbReference type="NCBI Taxonomy" id="9913"/>
    <lineage>
        <taxon>Eukaryota</taxon>
        <taxon>Metazoa</taxon>
        <taxon>Chordata</taxon>
        <taxon>Craniata</taxon>
        <taxon>Vertebrata</taxon>
        <taxon>Euteleostomi</taxon>
        <taxon>Mammalia</taxon>
        <taxon>Eutheria</taxon>
        <taxon>Laurasiatheria</taxon>
        <taxon>Artiodactyla</taxon>
        <taxon>Ruminantia</taxon>
        <taxon>Pecora</taxon>
        <taxon>Bovidae</taxon>
        <taxon>Bovinae</taxon>
        <taxon>Bos</taxon>
    </lineage>
</organism>
<reference key="1">
    <citation type="journal article" date="2009" name="Science">
        <title>The genome sequence of taurine cattle: a window to ruminant biology and evolution.</title>
        <authorList>
            <consortium name="The bovine genome sequencing and analysis consortium"/>
        </authorList>
    </citation>
    <scope>NUCLEOTIDE SEQUENCE [LARGE SCALE GENOMIC DNA]</scope>
</reference>
<dbReference type="EMBL" id="AAFC03072393">
    <property type="status" value="NOT_ANNOTATED_CDS"/>
    <property type="molecule type" value="Genomic_DNA"/>
</dbReference>
<dbReference type="RefSeq" id="NP_001156472.1">
    <property type="nucleotide sequence ID" value="NM_001163000.1"/>
</dbReference>
<dbReference type="RefSeq" id="XP_005221186.1">
    <property type="nucleotide sequence ID" value="XM_005221129.2"/>
</dbReference>
<dbReference type="RefSeq" id="XP_005221187.1">
    <property type="nucleotide sequence ID" value="XM_005221130.2"/>
</dbReference>
<dbReference type="RefSeq" id="XP_015314439.1">
    <property type="nucleotide sequence ID" value="XM_015458953.1"/>
</dbReference>
<dbReference type="RefSeq" id="XP_024835283.1">
    <property type="nucleotide sequence ID" value="XM_024979515.1"/>
</dbReference>
<dbReference type="SMR" id="E1BAR0"/>
<dbReference type="FunCoup" id="E1BAR0">
    <property type="interactions" value="13"/>
</dbReference>
<dbReference type="STRING" id="9913.ENSBTAP00000014245"/>
<dbReference type="PaxDb" id="9913-ENSBTAP00000014245"/>
<dbReference type="Ensembl" id="ENSBTAT00000014245.5">
    <property type="protein sequence ID" value="ENSBTAP00000014245.4"/>
    <property type="gene ID" value="ENSBTAG00000010758.5"/>
</dbReference>
<dbReference type="GeneID" id="100302388"/>
<dbReference type="KEGG" id="bta:100302388"/>
<dbReference type="CTD" id="643008"/>
<dbReference type="VEuPathDB" id="HostDB:ENSBTAG00000010758"/>
<dbReference type="VGNC" id="VGNC:35023">
    <property type="gene designation" value="SMIM5"/>
</dbReference>
<dbReference type="eggNOG" id="ENOG502S8TU">
    <property type="taxonomic scope" value="Eukaryota"/>
</dbReference>
<dbReference type="GeneTree" id="ENSGT00520000062027"/>
<dbReference type="HOGENOM" id="CLU_2644314_0_0_1"/>
<dbReference type="InParanoid" id="E1BAR0"/>
<dbReference type="OMA" id="HCCCCGK"/>
<dbReference type="OrthoDB" id="8789646at2759"/>
<dbReference type="TreeFam" id="TF330807"/>
<dbReference type="Proteomes" id="UP000009136">
    <property type="component" value="Chromosome 19"/>
</dbReference>
<dbReference type="Bgee" id="ENSBTAG00000010758">
    <property type="expression patterns" value="Expressed in olfactory segment of nasal mucosa and 96 other cell types or tissues"/>
</dbReference>
<dbReference type="GO" id="GO:0016020">
    <property type="term" value="C:membrane"/>
    <property type="evidence" value="ECO:0007669"/>
    <property type="project" value="UniProtKB-SubCell"/>
</dbReference>
<dbReference type="CDD" id="cd20254">
    <property type="entry name" value="CASIMO1_SMIM5"/>
    <property type="match status" value="1"/>
</dbReference>
<dbReference type="InterPro" id="IPR047133">
    <property type="entry name" value="SMIM5"/>
</dbReference>
<dbReference type="InterPro" id="IPR031671">
    <property type="entry name" value="SMIM5/18/22"/>
</dbReference>
<dbReference type="PANTHER" id="PTHR37344">
    <property type="entry name" value="SMALL INTEGRAL MEMBRANE PROTEIN 5"/>
    <property type="match status" value="1"/>
</dbReference>
<dbReference type="PANTHER" id="PTHR37344:SF1">
    <property type="entry name" value="SMALL INTEGRAL MEMBRANE PROTEIN 5"/>
    <property type="match status" value="1"/>
</dbReference>
<dbReference type="Pfam" id="PF15831">
    <property type="entry name" value="SMIM5_18_22"/>
    <property type="match status" value="1"/>
</dbReference>
<keyword id="KW-0472">Membrane</keyword>
<keyword id="KW-1185">Reference proteome</keyword>
<keyword id="KW-0812">Transmembrane</keyword>
<keyword id="KW-1133">Transmembrane helix</keyword>
<feature type="chain" id="PRO_0000410866" description="Small integral membrane protein 5">
    <location>
        <begin position="1"/>
        <end position="78"/>
    </location>
</feature>
<feature type="transmembrane region" description="Helical" evidence="1">
    <location>
        <begin position="32"/>
        <end position="52"/>
    </location>
</feature>
<sequence length="78" mass="8756">MAASKLMQEIHSIGDRLLLKLQRLPQAEPVEILAFSVLVVFTATVVLLLLIACGFCCCQYCWPRRRGRRTQVGPMTPP</sequence>
<proteinExistence type="predicted"/>
<protein>
    <recommendedName>
        <fullName>Small integral membrane protein 5</fullName>
    </recommendedName>
</protein>
<evidence type="ECO:0000255" key="1"/>
<evidence type="ECO:0000305" key="2"/>